<gene>
    <name type="ordered locus">PTO1279</name>
</gene>
<accession>Q6KZI8</accession>
<protein>
    <recommendedName>
        <fullName>2-dehydro-3-deoxy-D-gluconate/2-dehydro-3-deoxy-phosphogluconate aldolase</fullName>
        <ecNumber evidence="2">4.1.2.14</ecNumber>
        <ecNumber evidence="2">4.1.2.51</ecNumber>
    </recommendedName>
    <alternativeName>
        <fullName>2-dehydro-3-deoxy-galactonate/2-dehydro-3-deoxy-6-phosphogalactonate aldolase</fullName>
        <ecNumber evidence="2">4.1.2.-</ecNumber>
        <ecNumber evidence="2">4.1.2.21</ecNumber>
    </alternativeName>
</protein>
<dbReference type="EC" id="4.1.2.14" evidence="2"/>
<dbReference type="EC" id="4.1.2.51" evidence="2"/>
<dbReference type="EC" id="4.1.2.-" evidence="2"/>
<dbReference type="EC" id="4.1.2.21" evidence="2"/>
<dbReference type="EMBL" id="AE017261">
    <property type="protein sequence ID" value="AAT43864.1"/>
    <property type="molecule type" value="Genomic_DNA"/>
</dbReference>
<dbReference type="PDB" id="4UXD">
    <property type="method" value="X-ray"/>
    <property type="resolution" value="2.50 A"/>
    <property type="chains" value="A/B/C/D=1-266"/>
</dbReference>
<dbReference type="PDBsum" id="4UXD"/>
<dbReference type="SMR" id="Q6KZI8"/>
<dbReference type="FunCoup" id="Q6KZI8">
    <property type="interactions" value="74"/>
</dbReference>
<dbReference type="STRING" id="263820.PTO1279"/>
<dbReference type="PaxDb" id="263820-PTO1279"/>
<dbReference type="KEGG" id="pto:PTO1279"/>
<dbReference type="eggNOG" id="arCOG04172">
    <property type="taxonomic scope" value="Archaea"/>
</dbReference>
<dbReference type="HOGENOM" id="CLU_049343_5_1_2"/>
<dbReference type="InParanoid" id="Q6KZI8"/>
<dbReference type="BRENDA" id="4.1.2.51">
    <property type="organism ID" value="7518"/>
</dbReference>
<dbReference type="UniPathway" id="UPA00856">
    <property type="reaction ID" value="UER00829"/>
</dbReference>
<dbReference type="EvolutionaryTrace" id="Q6KZI8"/>
<dbReference type="Proteomes" id="UP000000438">
    <property type="component" value="Chromosome"/>
</dbReference>
<dbReference type="GO" id="GO:0008674">
    <property type="term" value="F:2-dehydro-3-deoxy-6-phosphogalactonate aldolase activity"/>
    <property type="evidence" value="ECO:0000314"/>
    <property type="project" value="UniProtKB"/>
</dbReference>
<dbReference type="GO" id="GO:0061677">
    <property type="term" value="F:2-dehydro-3-deoxy-D-gluconate aldolase activity"/>
    <property type="evidence" value="ECO:0007669"/>
    <property type="project" value="UniProtKB-EC"/>
</dbReference>
<dbReference type="GO" id="GO:0008675">
    <property type="term" value="F:2-dehydro-3-deoxy-phosphogluconate aldolase activity"/>
    <property type="evidence" value="ECO:0000314"/>
    <property type="project" value="UniProtKB"/>
</dbReference>
<dbReference type="GO" id="GO:0008840">
    <property type="term" value="F:4-hydroxy-tetrahydrodipicolinate synthase activity"/>
    <property type="evidence" value="ECO:0007669"/>
    <property type="project" value="TreeGrafter"/>
</dbReference>
<dbReference type="GO" id="GO:0016832">
    <property type="term" value="F:aldehyde-lyase activity"/>
    <property type="evidence" value="ECO:0000314"/>
    <property type="project" value="UniProtKB"/>
</dbReference>
<dbReference type="GO" id="GO:0006007">
    <property type="term" value="P:glucose catabolic process"/>
    <property type="evidence" value="ECO:0000314"/>
    <property type="project" value="UniProtKB"/>
</dbReference>
<dbReference type="CDD" id="cd00408">
    <property type="entry name" value="DHDPS-like"/>
    <property type="match status" value="1"/>
</dbReference>
<dbReference type="Gene3D" id="3.20.20.70">
    <property type="entry name" value="Aldolase class I"/>
    <property type="match status" value="1"/>
</dbReference>
<dbReference type="InterPro" id="IPR013785">
    <property type="entry name" value="Aldolase_TIM"/>
</dbReference>
<dbReference type="InterPro" id="IPR002220">
    <property type="entry name" value="DapA-like"/>
</dbReference>
<dbReference type="InterPro" id="IPR020625">
    <property type="entry name" value="Schiff_base-form_aldolases_AS"/>
</dbReference>
<dbReference type="PANTHER" id="PTHR12128:SF66">
    <property type="entry name" value="4-HYDROXY-2-OXOGLUTARATE ALDOLASE, MITOCHONDRIAL"/>
    <property type="match status" value="1"/>
</dbReference>
<dbReference type="PANTHER" id="PTHR12128">
    <property type="entry name" value="DIHYDRODIPICOLINATE SYNTHASE"/>
    <property type="match status" value="1"/>
</dbReference>
<dbReference type="Pfam" id="PF00701">
    <property type="entry name" value="DHDPS"/>
    <property type="match status" value="1"/>
</dbReference>
<dbReference type="PIRSF" id="PIRSF001365">
    <property type="entry name" value="DHDPS"/>
    <property type="match status" value="1"/>
</dbReference>
<dbReference type="PRINTS" id="PR00146">
    <property type="entry name" value="DHPICSNTHASE"/>
</dbReference>
<dbReference type="SMART" id="SM01130">
    <property type="entry name" value="DHDPS"/>
    <property type="match status" value="1"/>
</dbReference>
<dbReference type="SUPFAM" id="SSF51569">
    <property type="entry name" value="Aldolase"/>
    <property type="match status" value="1"/>
</dbReference>
<dbReference type="PROSITE" id="PS00666">
    <property type="entry name" value="DHDPS_2"/>
    <property type="match status" value="1"/>
</dbReference>
<name>KDGA_PICTO</name>
<evidence type="ECO:0000250" key="1"/>
<evidence type="ECO:0000269" key="2">
    <source>
    </source>
</evidence>
<evidence type="ECO:0000305" key="3"/>
<evidence type="ECO:0000305" key="4">
    <source>
    </source>
</evidence>
<evidence type="ECO:0007829" key="5">
    <source>
        <dbReference type="PDB" id="4UXD"/>
    </source>
</evidence>
<organism>
    <name type="scientific">Picrophilus torridus (strain ATCC 700027 / DSM 9790 / JCM 10055 / NBRC 100828 / KAW 2/3)</name>
    <dbReference type="NCBI Taxonomy" id="1122961"/>
    <lineage>
        <taxon>Archaea</taxon>
        <taxon>Methanobacteriati</taxon>
        <taxon>Thermoplasmatota</taxon>
        <taxon>Thermoplasmata</taxon>
        <taxon>Thermoplasmatales</taxon>
        <taxon>Picrophilaceae</taxon>
        <taxon>Picrophilus</taxon>
    </lineage>
</organism>
<keyword id="KW-0002">3D-structure</keyword>
<keyword id="KW-0119">Carbohydrate metabolism</keyword>
<keyword id="KW-0903">Direct protein sequencing</keyword>
<keyword id="KW-0456">Lyase</keyword>
<keyword id="KW-0704">Schiff base</keyword>
<proteinExistence type="evidence at protein level"/>
<sequence>MITPLDAHGNIDYNATNILIKYLEGINVDYLFPMGSTGVFPYFTLKERKDFLKFVRENSKKPIMAGVGSSSINEVNELMKFSMDIGIEAAVLMPPYYIKLNQEAIYHYYKEILSSNDMDLLIYNIPQFTNKIDPETVKNLKSEFSSVKGVKDSSADIRGFMEMLSLSDDDFAVFQGQDDLLFTSLELGASGGVCGTTNFSDGIVRLYHEYKNNREMALKIEKNDVIPLMKKLGKYQFPNAYYEYFYKKNNINGGYRPPMYRVGIEI</sequence>
<feature type="chain" id="PRO_0000422659" description="2-dehydro-3-deoxy-D-gluconate/2-dehydro-3-deoxy-phosphogluconate aldolase">
    <location>
        <begin position="1"/>
        <end position="266"/>
    </location>
</feature>
<feature type="active site" description="Schiff-base intermediate with substrate" evidence="1">
    <location>
        <position position="151"/>
    </location>
</feature>
<feature type="binding site" evidence="1">
    <location>
        <begin position="36"/>
        <end position="37"/>
    </location>
    <ligand>
        <name>substrate</name>
    </ligand>
</feature>
<feature type="binding site" evidence="1">
    <location>
        <begin position="123"/>
        <end position="125"/>
    </location>
    <ligand>
        <name>substrate</name>
    </ligand>
</feature>
<feature type="binding site" evidence="1">
    <location>
        <begin position="151"/>
        <end position="153"/>
    </location>
    <ligand>
        <name>substrate</name>
    </ligand>
</feature>
<feature type="site" description="Proton shuttle" evidence="1">
    <location>
        <position position="123"/>
    </location>
</feature>
<feature type="strand" evidence="5">
    <location>
        <begin position="9"/>
        <end position="11"/>
    </location>
</feature>
<feature type="helix" evidence="5">
    <location>
        <begin position="13"/>
        <end position="25"/>
    </location>
</feature>
<feature type="strand" evidence="5">
    <location>
        <begin position="29"/>
        <end position="32"/>
    </location>
</feature>
<feature type="turn" evidence="5">
    <location>
        <begin position="36"/>
        <end position="39"/>
    </location>
</feature>
<feature type="helix" evidence="5">
    <location>
        <begin position="40"/>
        <end position="42"/>
    </location>
</feature>
<feature type="helix" evidence="5">
    <location>
        <begin position="45"/>
        <end position="57"/>
    </location>
</feature>
<feature type="strand" evidence="5">
    <location>
        <begin position="63"/>
        <end position="66"/>
    </location>
</feature>
<feature type="helix" evidence="5">
    <location>
        <begin position="72"/>
        <end position="84"/>
    </location>
</feature>
<feature type="strand" evidence="5">
    <location>
        <begin position="89"/>
        <end position="92"/>
    </location>
</feature>
<feature type="helix" evidence="5">
    <location>
        <begin position="102"/>
        <end position="113"/>
    </location>
</feature>
<feature type="strand" evidence="5">
    <location>
        <begin position="118"/>
        <end position="124"/>
    </location>
</feature>
<feature type="turn" evidence="5">
    <location>
        <begin position="126"/>
        <end position="128"/>
    </location>
</feature>
<feature type="helix" evidence="5">
    <location>
        <begin position="134"/>
        <end position="143"/>
    </location>
</feature>
<feature type="strand" evidence="5">
    <location>
        <begin position="147"/>
        <end position="152"/>
    </location>
</feature>
<feature type="helix" evidence="5">
    <location>
        <begin position="157"/>
        <end position="164"/>
    </location>
</feature>
<feature type="strand" evidence="5">
    <location>
        <begin position="171"/>
        <end position="175"/>
    </location>
</feature>
<feature type="helix" evidence="5">
    <location>
        <begin position="178"/>
        <end position="180"/>
    </location>
</feature>
<feature type="helix" evidence="5">
    <location>
        <begin position="181"/>
        <end position="186"/>
    </location>
</feature>
<feature type="strand" evidence="5">
    <location>
        <begin position="191"/>
        <end position="193"/>
    </location>
</feature>
<feature type="helix" evidence="5">
    <location>
        <begin position="195"/>
        <end position="198"/>
    </location>
</feature>
<feature type="helix" evidence="5">
    <location>
        <begin position="202"/>
        <end position="209"/>
    </location>
</feature>
<feature type="turn" evidence="5">
    <location>
        <begin position="210"/>
        <end position="212"/>
    </location>
</feature>
<feature type="helix" evidence="5">
    <location>
        <begin position="214"/>
        <end position="223"/>
    </location>
</feature>
<feature type="helix" evidence="5">
    <location>
        <begin position="225"/>
        <end position="233"/>
    </location>
</feature>
<feature type="helix" evidence="5">
    <location>
        <begin position="239"/>
        <end position="248"/>
    </location>
</feature>
<comment type="function">
    <text evidence="2">Involved in the degradation of glucose via the Entner-Doudoroff pathway. Catalyzes the reversible cleavage of 2-keto-3-deoxy-6-phosphogluconate (KDPG) and 2-keto-3-deoxygluconate (KDG) forming pyruvate and glyceraldehyde 3-phosphate or glyceraldehyde, respectively. It is also able to catalyze the reversible cleavage of 2-keto-3-deoxy-6-phosphogalactonate (KDPGal) and 2-keto-3-deoxygalactonate (KDGal). It is equally active with both D- and L-glyceraldehyde.</text>
</comment>
<comment type="catalytic activity">
    <reaction evidence="2">
        <text>2-dehydro-3-deoxy-6-phospho-D-gluconate = D-glyceraldehyde 3-phosphate + pyruvate</text>
        <dbReference type="Rhea" id="RHEA:17089"/>
        <dbReference type="ChEBI" id="CHEBI:15361"/>
        <dbReference type="ChEBI" id="CHEBI:57569"/>
        <dbReference type="ChEBI" id="CHEBI:59776"/>
        <dbReference type="EC" id="4.1.2.14"/>
    </reaction>
</comment>
<comment type="catalytic activity">
    <reaction evidence="2">
        <text>2-dehydro-3-deoxy-D-gluconate = D-glyceraldehyde + pyruvate</text>
        <dbReference type="Rhea" id="RHEA:35583"/>
        <dbReference type="ChEBI" id="CHEBI:15361"/>
        <dbReference type="ChEBI" id="CHEBI:17378"/>
        <dbReference type="ChEBI" id="CHEBI:57990"/>
        <dbReference type="EC" id="4.1.2.51"/>
    </reaction>
</comment>
<comment type="catalytic activity">
    <reaction evidence="2">
        <text>2-dehydro-3-deoxy-6-phospho-D-galactonate = D-glyceraldehyde 3-phosphate + pyruvate</text>
        <dbReference type="Rhea" id="RHEA:24464"/>
        <dbReference type="ChEBI" id="CHEBI:15361"/>
        <dbReference type="ChEBI" id="CHEBI:58298"/>
        <dbReference type="ChEBI" id="CHEBI:59776"/>
        <dbReference type="EC" id="4.1.2.21"/>
    </reaction>
</comment>
<comment type="catalytic activity">
    <reaction evidence="2">
        <text>2-dehydro-3-deoxy-D-galactonate = D-glyceraldehyde + pyruvate</text>
        <dbReference type="Rhea" id="RHEA:46116"/>
        <dbReference type="ChEBI" id="CHEBI:15361"/>
        <dbReference type="ChEBI" id="CHEBI:17378"/>
        <dbReference type="ChEBI" id="CHEBI:57989"/>
    </reaction>
</comment>
<comment type="biophysicochemical properties">
    <kinetics>
        <KM evidence="2">0.3 mM for KDG (at 60 degrees Celsius and pH 6.2)</KM>
        <KM evidence="2">2.7 mM for pyruvate (at 60 degrees Celsius and pH 6.2)</KM>
        <KM evidence="2">4.6 mM for glyceraldehyde (at 60 degrees Celsius and pH 6.2)</KM>
        <KM evidence="2">8 mM for KDPG (at 60 degrees Celsius and pH 6.2)</KM>
        <Vmax evidence="2">67.0 umol/min/mg enzyme with KDG as D-glyceraldehyde (at 60 degrees Celsius and pH 6.2)</Vmax>
        <Vmax evidence="2">59.0 umol/min/mg enzyme with KDG as L-glyceraldehyde (at 60 degrees Celsius and pH 6.2)</Vmax>
        <Vmax evidence="2">50.0 umol/min/mg enzyme with KDG as substrate (at 60 degrees Celsius and pH 6.2)</Vmax>
        <Vmax evidence="2">0.63 umol/min/mg enzyme with KDPG as substrate (at 60 degrees Celsius and pH 6.2)</Vmax>
    </kinetics>
    <phDependence>
        <text evidence="2">Optimum pH is 5.5, and 50% of activity is found at pH 4.5 and 7.5.</text>
    </phDependence>
    <temperatureDependence>
        <text evidence="2">Optimum temperature is 65 degrees Celsius. It shows high thermostability. At 70 degrees Celsius, the enzyme does not lose activity upon incubation for 2 hours. The half-lives of the enzyme at 80 degrees Celsius and 90 degrees Celsius are 20 minutes and 15 minutes, respectively.</text>
    </temperatureDependence>
</comment>
<comment type="pathway">
    <text>Carbohydrate acid metabolism; 2-dehydro-3-deoxy-D-gluconate degradation; D-glyceraldehyde 3-phosphate and pyruvate from 2-dehydro-3-deoxy-D-gluconate: step 2/2.</text>
</comment>
<comment type="subunit">
    <text evidence="4">Homotetramer; dimer of dimers.</text>
</comment>
<comment type="similarity">
    <text evidence="3">Belongs to the DapA family. KDPG aldolase subfamily.</text>
</comment>
<reference key="1">
    <citation type="journal article" date="2004" name="Proc. Natl. Acad. Sci. U.S.A.">
        <title>Genome sequence of Picrophilus torridus and its implications for life around pH 0.</title>
        <authorList>
            <person name="Fuetterer O."/>
            <person name="Angelov A."/>
            <person name="Liesegang H."/>
            <person name="Gottschalk G."/>
            <person name="Schleper C."/>
            <person name="Schepers B."/>
            <person name="Dock C."/>
            <person name="Antranikian G."/>
            <person name="Liebl W."/>
        </authorList>
    </citation>
    <scope>NUCLEOTIDE SEQUENCE [LARGE SCALE GENOMIC DNA]</scope>
    <source>
        <strain>ATCC 700027 / DSM 9790 / JCM 10055 / NBRC 100828 / KAW 2/3</strain>
    </source>
</reference>
<reference key="2">
    <citation type="journal article" date="2010" name="J. Bacteriol.">
        <title>The nonphosphorylative Entner-Doudoroff pathway in the thermoacidophilic euryarchaeon Picrophilus torridus involves a novel 2-keto-3-deoxygluconate-specific aldolase.</title>
        <authorList>
            <person name="Reher M."/>
            <person name="Fuhrer T."/>
            <person name="Bott M."/>
            <person name="Schonheit P."/>
        </authorList>
    </citation>
    <scope>PROTEIN SEQUENCE OF 1-37</scope>
    <scope>FUNCTION</scope>
    <scope>CATALYTIC ACTIVITY</scope>
    <scope>BIOPHYSICOCHEMICAL PROPERTIES</scope>
    <scope>SUBSTRATE SPECIFICITY</scope>
    <scope>SUBUNIT</scope>
</reference>